<proteinExistence type="inferred from homology"/>
<name>Y1469_SODGM</name>
<accession>Q2NSY1</accession>
<organism>
    <name type="scientific">Sodalis glossinidius (strain morsitans)</name>
    <dbReference type="NCBI Taxonomy" id="343509"/>
    <lineage>
        <taxon>Bacteria</taxon>
        <taxon>Pseudomonadati</taxon>
        <taxon>Pseudomonadota</taxon>
        <taxon>Gammaproteobacteria</taxon>
        <taxon>Enterobacterales</taxon>
        <taxon>Bruguierivoracaceae</taxon>
        <taxon>Sodalis</taxon>
    </lineage>
</organism>
<reference key="1">
    <citation type="journal article" date="2006" name="Genome Res.">
        <title>Massive genome erosion and functional adaptations provide insights into the symbiotic lifestyle of Sodalis glossinidius in the tsetse host.</title>
        <authorList>
            <person name="Toh H."/>
            <person name="Weiss B.L."/>
            <person name="Perkin S.A.H."/>
            <person name="Yamashita A."/>
            <person name="Oshima K."/>
            <person name="Hattori M."/>
            <person name="Aksoy S."/>
        </authorList>
    </citation>
    <scope>NUCLEOTIDE SEQUENCE [LARGE SCALE GENOMIC DNA]</scope>
    <source>
        <strain>morsitans</strain>
    </source>
</reference>
<dbReference type="EMBL" id="AP008232">
    <property type="protein sequence ID" value="BAE74744.1"/>
    <property type="molecule type" value="Genomic_DNA"/>
</dbReference>
<dbReference type="KEGG" id="sgl:SG1469"/>
<dbReference type="eggNOG" id="COG1742">
    <property type="taxonomic scope" value="Bacteria"/>
</dbReference>
<dbReference type="HOGENOM" id="CLU_1915711_0_0_6"/>
<dbReference type="Proteomes" id="UP000001932">
    <property type="component" value="Chromosome"/>
</dbReference>
<dbReference type="GO" id="GO:0005886">
    <property type="term" value="C:plasma membrane"/>
    <property type="evidence" value="ECO:0007669"/>
    <property type="project" value="UniProtKB-SubCell"/>
</dbReference>
<dbReference type="InterPro" id="IPR003844">
    <property type="entry name" value="UPF0060"/>
</dbReference>
<dbReference type="PANTHER" id="PTHR36116">
    <property type="entry name" value="UPF0060 MEMBRANE PROTEIN YNFA"/>
    <property type="match status" value="1"/>
</dbReference>
<dbReference type="PANTHER" id="PTHR36116:SF1">
    <property type="entry name" value="UPF0060 MEMBRANE PROTEIN YNFA"/>
    <property type="match status" value="1"/>
</dbReference>
<dbReference type="Pfam" id="PF02694">
    <property type="entry name" value="UPF0060"/>
    <property type="match status" value="1"/>
</dbReference>
<feature type="chain" id="PRO_0000282267" description="UPF0060 membrane protein SG1469">
    <location>
        <begin position="1"/>
        <end position="132"/>
    </location>
</feature>
<feature type="transmembrane region" description="Helical" evidence="2">
    <location>
        <begin position="5"/>
        <end position="25"/>
    </location>
</feature>
<feature type="transmembrane region" description="Helical" evidence="2">
    <location>
        <begin position="32"/>
        <end position="52"/>
    </location>
</feature>
<feature type="transmembrane region" description="Helical" evidence="2">
    <location>
        <begin position="60"/>
        <end position="80"/>
    </location>
</feature>
<sequence>MTKTVLLYIATAVAAILGCYLPYCYVKRDGSLLLIPAALSLIAFVGLLVLYPAASGRVYAAYGGVYILTAFLWLRFIDGIKLSPPGLSGRGGGIVRGRDHDRRLAPRRGLRGAESGVDLAGFACGCPTRRSH</sequence>
<protein>
    <recommendedName>
        <fullName>UPF0060 membrane protein SG1469</fullName>
    </recommendedName>
</protein>
<gene>
    <name type="ordered locus">SG1469</name>
</gene>
<comment type="subcellular location">
    <subcellularLocation>
        <location evidence="1">Cell inner membrane</location>
        <topology evidence="1">Multi-pass membrane protein</topology>
    </subcellularLocation>
</comment>
<comment type="similarity">
    <text evidence="3">Belongs to the UPF0060 family.</text>
</comment>
<keyword id="KW-0997">Cell inner membrane</keyword>
<keyword id="KW-1003">Cell membrane</keyword>
<keyword id="KW-0472">Membrane</keyword>
<keyword id="KW-0812">Transmembrane</keyword>
<keyword id="KW-1133">Transmembrane helix</keyword>
<evidence type="ECO:0000250" key="1"/>
<evidence type="ECO:0000255" key="2"/>
<evidence type="ECO:0000305" key="3"/>